<accession>Q88QM0</accession>
<feature type="chain" id="PRO_0000265276" description="Large ribosomal subunit protein uL6">
    <location>
        <begin position="1"/>
        <end position="177"/>
    </location>
</feature>
<proteinExistence type="inferred from homology"/>
<gene>
    <name evidence="1" type="primary">rplF</name>
    <name type="ordered locus">PP_0469</name>
</gene>
<protein>
    <recommendedName>
        <fullName evidence="1">Large ribosomal subunit protein uL6</fullName>
    </recommendedName>
    <alternativeName>
        <fullName evidence="2">50S ribosomal protein L6</fullName>
    </alternativeName>
</protein>
<comment type="function">
    <text evidence="1">This protein binds to the 23S rRNA, and is important in its secondary structure. It is located near the subunit interface in the base of the L7/L12 stalk, and near the tRNA binding site of the peptidyltransferase center.</text>
</comment>
<comment type="subunit">
    <text evidence="1">Part of the 50S ribosomal subunit.</text>
</comment>
<comment type="similarity">
    <text evidence="1">Belongs to the universal ribosomal protein uL6 family.</text>
</comment>
<organism>
    <name type="scientific">Pseudomonas putida (strain ATCC 47054 / DSM 6125 / CFBP 8728 / NCIMB 11950 / KT2440)</name>
    <dbReference type="NCBI Taxonomy" id="160488"/>
    <lineage>
        <taxon>Bacteria</taxon>
        <taxon>Pseudomonadati</taxon>
        <taxon>Pseudomonadota</taxon>
        <taxon>Gammaproteobacteria</taxon>
        <taxon>Pseudomonadales</taxon>
        <taxon>Pseudomonadaceae</taxon>
        <taxon>Pseudomonas</taxon>
    </lineage>
</organism>
<name>RL6_PSEPK</name>
<keyword id="KW-1185">Reference proteome</keyword>
<keyword id="KW-0687">Ribonucleoprotein</keyword>
<keyword id="KW-0689">Ribosomal protein</keyword>
<keyword id="KW-0694">RNA-binding</keyword>
<keyword id="KW-0699">rRNA-binding</keyword>
<evidence type="ECO:0000255" key="1">
    <source>
        <dbReference type="HAMAP-Rule" id="MF_01365"/>
    </source>
</evidence>
<evidence type="ECO:0000305" key="2"/>
<reference key="1">
    <citation type="journal article" date="2002" name="Environ. Microbiol.">
        <title>Complete genome sequence and comparative analysis of the metabolically versatile Pseudomonas putida KT2440.</title>
        <authorList>
            <person name="Nelson K.E."/>
            <person name="Weinel C."/>
            <person name="Paulsen I.T."/>
            <person name="Dodson R.J."/>
            <person name="Hilbert H."/>
            <person name="Martins dos Santos V.A.P."/>
            <person name="Fouts D.E."/>
            <person name="Gill S.R."/>
            <person name="Pop M."/>
            <person name="Holmes M."/>
            <person name="Brinkac L.M."/>
            <person name="Beanan M.J."/>
            <person name="DeBoy R.T."/>
            <person name="Daugherty S.C."/>
            <person name="Kolonay J.F."/>
            <person name="Madupu R."/>
            <person name="Nelson W.C."/>
            <person name="White O."/>
            <person name="Peterson J.D."/>
            <person name="Khouri H.M."/>
            <person name="Hance I."/>
            <person name="Chris Lee P."/>
            <person name="Holtzapple E.K."/>
            <person name="Scanlan D."/>
            <person name="Tran K."/>
            <person name="Moazzez A."/>
            <person name="Utterback T.R."/>
            <person name="Rizzo M."/>
            <person name="Lee K."/>
            <person name="Kosack D."/>
            <person name="Moestl D."/>
            <person name="Wedler H."/>
            <person name="Lauber J."/>
            <person name="Stjepandic D."/>
            <person name="Hoheisel J."/>
            <person name="Straetz M."/>
            <person name="Heim S."/>
            <person name="Kiewitz C."/>
            <person name="Eisen J.A."/>
            <person name="Timmis K.N."/>
            <person name="Duesterhoeft A."/>
            <person name="Tuemmler B."/>
            <person name="Fraser C.M."/>
        </authorList>
    </citation>
    <scope>NUCLEOTIDE SEQUENCE [LARGE SCALE GENOMIC DNA]</scope>
    <source>
        <strain>ATCC 47054 / DSM 6125 / CFBP 8728 / NCIMB 11950 / KT2440</strain>
    </source>
</reference>
<sequence length="177" mass="19143">MSRVAKNPVKLPSGVEVKFAGQQLSVKGAKGTLELNVHSSVEVTEESGELRFVARNGDQQARAMAGTTRALVNNMVQGVSQGFERKLQLVGVGYKAQAKGTVLNLALGFSHPVDYELPAGITAETPSQTDILIKGIDKQLVGQVAAEIRDFRPPEPYKGKGVRYADEVVRRKEAKKK</sequence>
<dbReference type="EMBL" id="AE015451">
    <property type="protein sequence ID" value="AAN66099.1"/>
    <property type="molecule type" value="Genomic_DNA"/>
</dbReference>
<dbReference type="RefSeq" id="NP_742635.1">
    <property type="nucleotide sequence ID" value="NC_002947.4"/>
</dbReference>
<dbReference type="RefSeq" id="WP_003255469.1">
    <property type="nucleotide sequence ID" value="NZ_CP169744.1"/>
</dbReference>
<dbReference type="SMR" id="Q88QM0"/>
<dbReference type="STRING" id="160488.PP_0469"/>
<dbReference type="PaxDb" id="160488-PP_0469"/>
<dbReference type="GeneID" id="88818687"/>
<dbReference type="KEGG" id="ppu:PP_0469"/>
<dbReference type="PATRIC" id="fig|160488.4.peg.501"/>
<dbReference type="eggNOG" id="COG0097">
    <property type="taxonomic scope" value="Bacteria"/>
</dbReference>
<dbReference type="HOGENOM" id="CLU_065464_1_2_6"/>
<dbReference type="OrthoDB" id="9805007at2"/>
<dbReference type="PhylomeDB" id="Q88QM0"/>
<dbReference type="BioCyc" id="PPUT160488:G1G01-515-MONOMER"/>
<dbReference type="Proteomes" id="UP000000556">
    <property type="component" value="Chromosome"/>
</dbReference>
<dbReference type="GO" id="GO:0022625">
    <property type="term" value="C:cytosolic large ribosomal subunit"/>
    <property type="evidence" value="ECO:0007669"/>
    <property type="project" value="TreeGrafter"/>
</dbReference>
<dbReference type="GO" id="GO:0019843">
    <property type="term" value="F:rRNA binding"/>
    <property type="evidence" value="ECO:0007669"/>
    <property type="project" value="UniProtKB-UniRule"/>
</dbReference>
<dbReference type="GO" id="GO:0003735">
    <property type="term" value="F:structural constituent of ribosome"/>
    <property type="evidence" value="ECO:0007669"/>
    <property type="project" value="InterPro"/>
</dbReference>
<dbReference type="GO" id="GO:0002181">
    <property type="term" value="P:cytoplasmic translation"/>
    <property type="evidence" value="ECO:0007669"/>
    <property type="project" value="TreeGrafter"/>
</dbReference>
<dbReference type="FunFam" id="3.90.930.12:FF:000001">
    <property type="entry name" value="50S ribosomal protein L6"/>
    <property type="match status" value="1"/>
</dbReference>
<dbReference type="FunFam" id="3.90.930.12:FF:000002">
    <property type="entry name" value="50S ribosomal protein L6"/>
    <property type="match status" value="1"/>
</dbReference>
<dbReference type="Gene3D" id="3.90.930.12">
    <property type="entry name" value="Ribosomal protein L6, alpha-beta domain"/>
    <property type="match status" value="2"/>
</dbReference>
<dbReference type="HAMAP" id="MF_01365_B">
    <property type="entry name" value="Ribosomal_uL6_B"/>
    <property type="match status" value="1"/>
</dbReference>
<dbReference type="InterPro" id="IPR000702">
    <property type="entry name" value="Ribosomal_uL6-like"/>
</dbReference>
<dbReference type="InterPro" id="IPR036789">
    <property type="entry name" value="Ribosomal_uL6-like_a/b-dom_sf"/>
</dbReference>
<dbReference type="InterPro" id="IPR020040">
    <property type="entry name" value="Ribosomal_uL6_a/b-dom"/>
</dbReference>
<dbReference type="InterPro" id="IPR019906">
    <property type="entry name" value="Ribosomal_uL6_bac-type"/>
</dbReference>
<dbReference type="InterPro" id="IPR002358">
    <property type="entry name" value="Ribosomal_uL6_CS"/>
</dbReference>
<dbReference type="NCBIfam" id="TIGR03654">
    <property type="entry name" value="L6_bact"/>
    <property type="match status" value="1"/>
</dbReference>
<dbReference type="PANTHER" id="PTHR11655">
    <property type="entry name" value="60S/50S RIBOSOMAL PROTEIN L6/L9"/>
    <property type="match status" value="1"/>
</dbReference>
<dbReference type="PANTHER" id="PTHR11655:SF14">
    <property type="entry name" value="LARGE RIBOSOMAL SUBUNIT PROTEIN UL6M"/>
    <property type="match status" value="1"/>
</dbReference>
<dbReference type="Pfam" id="PF00347">
    <property type="entry name" value="Ribosomal_L6"/>
    <property type="match status" value="2"/>
</dbReference>
<dbReference type="PIRSF" id="PIRSF002162">
    <property type="entry name" value="Ribosomal_L6"/>
    <property type="match status" value="1"/>
</dbReference>
<dbReference type="PRINTS" id="PR00059">
    <property type="entry name" value="RIBOSOMALL6"/>
</dbReference>
<dbReference type="SUPFAM" id="SSF56053">
    <property type="entry name" value="Ribosomal protein L6"/>
    <property type="match status" value="2"/>
</dbReference>
<dbReference type="PROSITE" id="PS00525">
    <property type="entry name" value="RIBOSOMAL_L6_1"/>
    <property type="match status" value="1"/>
</dbReference>